<dbReference type="EC" id="2.3.1.1"/>
<dbReference type="EMBL" id="BA000003">
    <property type="protein sequence ID" value="BAB13154.1"/>
    <property type="molecule type" value="Genomic_DNA"/>
</dbReference>
<dbReference type="EMBL" id="AB005263">
    <property type="protein sequence ID" value="BAA25386.1"/>
    <property type="molecule type" value="mRNA"/>
</dbReference>
<dbReference type="RefSeq" id="NP_240268.1">
    <property type="nucleotide sequence ID" value="NC_002528.1"/>
</dbReference>
<dbReference type="RefSeq" id="WP_009874409.1">
    <property type="nucleotide sequence ID" value="NZ_AP036055.1"/>
</dbReference>
<dbReference type="SMR" id="O66143"/>
<dbReference type="STRING" id="563178.BUAP5A_449"/>
<dbReference type="EnsemblBacteria" id="BAB13154">
    <property type="protein sequence ID" value="BAB13154"/>
    <property type="gene ID" value="BAB13154"/>
</dbReference>
<dbReference type="KEGG" id="buc:BU456"/>
<dbReference type="PATRIC" id="fig|107806.10.peg.466"/>
<dbReference type="eggNOG" id="COG0548">
    <property type="taxonomic scope" value="Bacteria"/>
</dbReference>
<dbReference type="eggNOG" id="COG1246">
    <property type="taxonomic scope" value="Bacteria"/>
</dbReference>
<dbReference type="HOGENOM" id="CLU_024773_0_0_6"/>
<dbReference type="UniPathway" id="UPA00068">
    <property type="reaction ID" value="UER00106"/>
</dbReference>
<dbReference type="Proteomes" id="UP000001806">
    <property type="component" value="Chromosome"/>
</dbReference>
<dbReference type="GO" id="GO:0005737">
    <property type="term" value="C:cytoplasm"/>
    <property type="evidence" value="ECO:0007669"/>
    <property type="project" value="UniProtKB-SubCell"/>
</dbReference>
<dbReference type="GO" id="GO:0004042">
    <property type="term" value="F:L-glutamate N-acetyltransferase activity"/>
    <property type="evidence" value="ECO:0007669"/>
    <property type="project" value="UniProtKB-UniRule"/>
</dbReference>
<dbReference type="GO" id="GO:0006526">
    <property type="term" value="P:L-arginine biosynthetic process"/>
    <property type="evidence" value="ECO:0007669"/>
    <property type="project" value="UniProtKB-UniRule"/>
</dbReference>
<dbReference type="CDD" id="cd04237">
    <property type="entry name" value="AAK_NAGS-ABP"/>
    <property type="match status" value="1"/>
</dbReference>
<dbReference type="CDD" id="cd04301">
    <property type="entry name" value="NAT_SF"/>
    <property type="match status" value="1"/>
</dbReference>
<dbReference type="FunFam" id="3.40.1160.10:FF:000005">
    <property type="entry name" value="Amino-acid acetyltransferase"/>
    <property type="match status" value="1"/>
</dbReference>
<dbReference type="FunFam" id="3.40.630.30:FF:000009">
    <property type="entry name" value="Amino-acid acetyltransferase"/>
    <property type="match status" value="1"/>
</dbReference>
<dbReference type="Gene3D" id="3.40.630.30">
    <property type="match status" value="1"/>
</dbReference>
<dbReference type="Gene3D" id="3.40.1160.10">
    <property type="entry name" value="Acetylglutamate kinase-like"/>
    <property type="match status" value="1"/>
</dbReference>
<dbReference type="HAMAP" id="MF_01105">
    <property type="entry name" value="N_acetyl_glu_synth"/>
    <property type="match status" value="1"/>
</dbReference>
<dbReference type="InterPro" id="IPR036393">
    <property type="entry name" value="AceGlu_kinase-like_sf"/>
</dbReference>
<dbReference type="InterPro" id="IPR016181">
    <property type="entry name" value="Acyl_CoA_acyltransferase"/>
</dbReference>
<dbReference type="InterPro" id="IPR001048">
    <property type="entry name" value="Asp/Glu/Uridylate_kinase"/>
</dbReference>
<dbReference type="InterPro" id="IPR000182">
    <property type="entry name" value="GNAT_dom"/>
</dbReference>
<dbReference type="InterPro" id="IPR033719">
    <property type="entry name" value="NAGS_kin"/>
</dbReference>
<dbReference type="InterPro" id="IPR010167">
    <property type="entry name" value="NH2A_AcTrfase"/>
</dbReference>
<dbReference type="NCBIfam" id="TIGR01890">
    <property type="entry name" value="N-Ac-Glu-synth"/>
    <property type="match status" value="1"/>
</dbReference>
<dbReference type="NCBIfam" id="NF003641">
    <property type="entry name" value="PRK05279.1"/>
    <property type="match status" value="1"/>
</dbReference>
<dbReference type="PANTHER" id="PTHR30602">
    <property type="entry name" value="AMINO-ACID ACETYLTRANSFERASE"/>
    <property type="match status" value="1"/>
</dbReference>
<dbReference type="PANTHER" id="PTHR30602:SF12">
    <property type="entry name" value="AMINO-ACID ACETYLTRANSFERASE NAGS1, CHLOROPLASTIC-RELATED"/>
    <property type="match status" value="1"/>
</dbReference>
<dbReference type="Pfam" id="PF00696">
    <property type="entry name" value="AA_kinase"/>
    <property type="match status" value="1"/>
</dbReference>
<dbReference type="Pfam" id="PF00583">
    <property type="entry name" value="Acetyltransf_1"/>
    <property type="match status" value="1"/>
</dbReference>
<dbReference type="PIRSF" id="PIRSF000423">
    <property type="entry name" value="ArgA"/>
    <property type="match status" value="1"/>
</dbReference>
<dbReference type="SUPFAM" id="SSF55729">
    <property type="entry name" value="Acyl-CoA N-acyltransferases (Nat)"/>
    <property type="match status" value="1"/>
</dbReference>
<dbReference type="SUPFAM" id="SSF53633">
    <property type="entry name" value="Carbamate kinase-like"/>
    <property type="match status" value="1"/>
</dbReference>
<dbReference type="PROSITE" id="PS51186">
    <property type="entry name" value="GNAT"/>
    <property type="match status" value="1"/>
</dbReference>
<organism>
    <name type="scientific">Buchnera aphidicola subsp. Acyrthosiphon pisum (strain APS)</name>
    <name type="common">Acyrthosiphon pisum symbiotic bacterium</name>
    <dbReference type="NCBI Taxonomy" id="107806"/>
    <lineage>
        <taxon>Bacteria</taxon>
        <taxon>Pseudomonadati</taxon>
        <taxon>Pseudomonadota</taxon>
        <taxon>Gammaproteobacteria</taxon>
        <taxon>Enterobacterales</taxon>
        <taxon>Erwiniaceae</taxon>
        <taxon>Buchnera</taxon>
    </lineage>
</organism>
<evidence type="ECO:0000250" key="1"/>
<evidence type="ECO:0000305" key="2"/>
<name>ARGA_BUCAI</name>
<sequence>MKERNTELVQGFRHSVPYINAHRGKTFVIMLGGEAIKYGNFYSIINDIGLLHSLGIRLVVVYGACPQINTSLKEKNIKIIYHKSIRITDLASLEQVKQAAGKLQLDITARLSMSLTNTPLQGANISVVSGNFIISQPLGVDDGVDYCHSGRVRRIDKNAINCQLNNGAIVLIGPVAVSVTGESFNLTSEEIATQVSIELKAEKMIGFCGNQGVINDEGKIISELLSNDIKNIIKKLEKKGDYISSTVRFLKGSIKACKSGVNRSHLISYHKSGALLQELFSRDGIGTQMVMESAEKIRGASINDIGGILELIRPLEHKGILVRRSREQLEIEVDKFTIIEHDNLTIACAALYPFFKEKIGEMACLAVHPDYRNSSRGDALLKKIKMNAKDMHLKRIFVLTTQSIHWFQERGFILVDIEVLPESKKKMYNYQRGSKILMIDVI</sequence>
<gene>
    <name type="primary">argA</name>
    <name type="ordered locus">BU456</name>
</gene>
<protein>
    <recommendedName>
        <fullName>Amino-acid acetyltransferase</fullName>
        <ecNumber>2.3.1.1</ecNumber>
    </recommendedName>
    <alternativeName>
        <fullName>N-acetylglutamate synthase</fullName>
        <shortName>AGS</shortName>
        <shortName>NAGS</shortName>
    </alternativeName>
</protein>
<feature type="chain" id="PRO_0000186788" description="Amino-acid acetyltransferase">
    <location>
        <begin position="1"/>
        <end position="442"/>
    </location>
</feature>
<feature type="domain" description="N-acetyltransferase">
    <location>
        <begin position="295"/>
        <end position="442"/>
    </location>
</feature>
<proteinExistence type="evidence at transcript level"/>
<reference key="1">
    <citation type="journal article" date="2000" name="Nature">
        <title>Genome sequence of the endocellular bacterial symbiont of aphids Buchnera sp. APS.</title>
        <authorList>
            <person name="Shigenobu S."/>
            <person name="Watanabe H."/>
            <person name="Hattori M."/>
            <person name="Sakaki Y."/>
            <person name="Ishikawa H."/>
        </authorList>
    </citation>
    <scope>NUCLEOTIDE SEQUENCE [LARGE SCALE GENOMIC DNA]</scope>
    <source>
        <strain>APS</strain>
    </source>
</reference>
<reference key="2">
    <citation type="journal article" date="1997" name="Insect Biochem. Mol. Biol.">
        <title>Differential display of mRNAs related to amino acid metabolism in the endosymbiotic system of aphids.</title>
        <authorList>
            <person name="Nakabachi A."/>
            <person name="Ishikawa H."/>
        </authorList>
    </citation>
    <scope>NUCLEOTIDE SEQUENCE [MRNA] OF 25-71</scope>
</reference>
<comment type="catalytic activity">
    <reaction>
        <text>L-glutamate + acetyl-CoA = N-acetyl-L-glutamate + CoA + H(+)</text>
        <dbReference type="Rhea" id="RHEA:24292"/>
        <dbReference type="ChEBI" id="CHEBI:15378"/>
        <dbReference type="ChEBI" id="CHEBI:29985"/>
        <dbReference type="ChEBI" id="CHEBI:44337"/>
        <dbReference type="ChEBI" id="CHEBI:57287"/>
        <dbReference type="ChEBI" id="CHEBI:57288"/>
        <dbReference type="EC" id="2.3.1.1"/>
    </reaction>
</comment>
<comment type="pathway">
    <text>Amino-acid biosynthesis; L-arginine biosynthesis; N(2)-acetyl-L-ornithine from L-glutamate: step 1/4.</text>
</comment>
<comment type="subunit">
    <text evidence="1">Homohexamer.</text>
</comment>
<comment type="subcellular location">
    <subcellularLocation>
        <location evidence="1">Cytoplasm</location>
    </subcellularLocation>
</comment>
<comment type="similarity">
    <text evidence="2">Belongs to the acetyltransferase family. ArgA subfamily.</text>
</comment>
<keyword id="KW-0012">Acyltransferase</keyword>
<keyword id="KW-0028">Amino-acid biosynthesis</keyword>
<keyword id="KW-0055">Arginine biosynthesis</keyword>
<keyword id="KW-0963">Cytoplasm</keyword>
<keyword id="KW-1185">Reference proteome</keyword>
<keyword id="KW-0808">Transferase</keyword>
<accession>O66143</accession>